<name>FER_GLEJA</name>
<accession>P00233</accession>
<keyword id="KW-0001">2Fe-2S</keyword>
<keyword id="KW-0150">Chloroplast</keyword>
<keyword id="KW-0903">Direct protein sequencing</keyword>
<keyword id="KW-0249">Electron transport</keyword>
<keyword id="KW-0408">Iron</keyword>
<keyword id="KW-0411">Iron-sulfur</keyword>
<keyword id="KW-0479">Metal-binding</keyword>
<keyword id="KW-0934">Plastid</keyword>
<keyword id="KW-0813">Transport</keyword>
<protein>
    <recommendedName>
        <fullName>Ferredoxin</fullName>
    </recommendedName>
</protein>
<comment type="function">
    <text>Ferredoxins are iron-sulfur proteins that transfer electrons in a wide variety of metabolic reactions.</text>
</comment>
<comment type="cofactor">
    <cofactor>
        <name>[2Fe-2S] cluster</name>
        <dbReference type="ChEBI" id="CHEBI:190135"/>
    </cofactor>
    <text>Binds 1 [2Fe-2S] cluster.</text>
</comment>
<comment type="subcellular location">
    <subcellularLocation>
        <location>Plastid</location>
        <location>Chloroplast</location>
    </subcellularLocation>
</comment>
<comment type="similarity">
    <text evidence="2">Belongs to the 2Fe2S plant-type ferredoxin family.</text>
</comment>
<proteinExistence type="evidence at protein level"/>
<evidence type="ECO:0000255" key="1">
    <source>
        <dbReference type="PROSITE-ProRule" id="PRU00465"/>
    </source>
</evidence>
<evidence type="ECO:0000305" key="2"/>
<organism>
    <name type="scientific">Gleichenia japonica</name>
    <name type="common">Urajiro</name>
    <name type="synonym">Fern</name>
    <dbReference type="NCBI Taxonomy" id="3274"/>
    <lineage>
        <taxon>Eukaryota</taxon>
        <taxon>Viridiplantae</taxon>
        <taxon>Streptophyta</taxon>
        <taxon>Embryophyta</taxon>
        <taxon>Tracheophyta</taxon>
        <taxon>Polypodiopsida</taxon>
        <taxon>Polypodiidae</taxon>
        <taxon>Gleicheniales</taxon>
        <taxon>Gleicheniaceae</taxon>
        <taxon>Gleichenia</taxon>
    </lineage>
</organism>
<sequence>AIFKVKFLTPDGERTIEVPDDKFILDAGEEAGLDLPYSCRAGACSSCTGKLLDGRVDQSEQSFLDDDQMAEGFVLTCVAYPAGDITIETHAEEKL</sequence>
<reference key="1">
    <citation type="journal article" date="1982" name="J. Biochem.">
        <title>Purification and amino acid sequence of a fern (Gleichenia japonica) ferredoxin.</title>
        <authorList>
            <person name="Hase T."/>
            <person name="Yamanashi H."/>
            <person name="Matsubara H."/>
        </authorList>
    </citation>
    <scope>PROTEIN SEQUENCE</scope>
</reference>
<feature type="chain" id="PRO_0000189334" description="Ferredoxin">
    <location>
        <begin position="1"/>
        <end position="95"/>
    </location>
</feature>
<feature type="domain" description="2Fe-2S ferredoxin-type" evidence="1">
    <location>
        <begin position="3"/>
        <end position="93"/>
    </location>
</feature>
<feature type="binding site" evidence="1">
    <location>
        <position position="39"/>
    </location>
    <ligand>
        <name>[2Fe-2S] cluster</name>
        <dbReference type="ChEBI" id="CHEBI:190135"/>
    </ligand>
</feature>
<feature type="binding site" evidence="1">
    <location>
        <position position="44"/>
    </location>
    <ligand>
        <name>[2Fe-2S] cluster</name>
        <dbReference type="ChEBI" id="CHEBI:190135"/>
    </ligand>
</feature>
<feature type="binding site" evidence="1">
    <location>
        <position position="47"/>
    </location>
    <ligand>
        <name>[2Fe-2S] cluster</name>
        <dbReference type="ChEBI" id="CHEBI:190135"/>
    </ligand>
</feature>
<feature type="binding site" evidence="1">
    <location>
        <position position="77"/>
    </location>
    <ligand>
        <name>[2Fe-2S] cluster</name>
        <dbReference type="ChEBI" id="CHEBI:190135"/>
    </ligand>
</feature>
<dbReference type="PIR" id="A00239">
    <property type="entry name" value="FEFNG"/>
</dbReference>
<dbReference type="SMR" id="P00233"/>
<dbReference type="GO" id="GO:0009570">
    <property type="term" value="C:chloroplast stroma"/>
    <property type="evidence" value="ECO:0007669"/>
    <property type="project" value="TreeGrafter"/>
</dbReference>
<dbReference type="GO" id="GO:0051537">
    <property type="term" value="F:2 iron, 2 sulfur cluster binding"/>
    <property type="evidence" value="ECO:0007669"/>
    <property type="project" value="UniProtKB-KW"/>
</dbReference>
<dbReference type="GO" id="GO:0009055">
    <property type="term" value="F:electron transfer activity"/>
    <property type="evidence" value="ECO:0007669"/>
    <property type="project" value="InterPro"/>
</dbReference>
<dbReference type="GO" id="GO:0046872">
    <property type="term" value="F:metal ion binding"/>
    <property type="evidence" value="ECO:0007669"/>
    <property type="project" value="UniProtKB-KW"/>
</dbReference>
<dbReference type="GO" id="GO:0022900">
    <property type="term" value="P:electron transport chain"/>
    <property type="evidence" value="ECO:0007669"/>
    <property type="project" value="InterPro"/>
</dbReference>
<dbReference type="CDD" id="cd00207">
    <property type="entry name" value="fer2"/>
    <property type="match status" value="1"/>
</dbReference>
<dbReference type="FunFam" id="3.10.20.30:FF:000014">
    <property type="entry name" value="Ferredoxin"/>
    <property type="match status" value="1"/>
</dbReference>
<dbReference type="Gene3D" id="3.10.20.30">
    <property type="match status" value="1"/>
</dbReference>
<dbReference type="InterPro" id="IPR036010">
    <property type="entry name" value="2Fe-2S_ferredoxin-like_sf"/>
</dbReference>
<dbReference type="InterPro" id="IPR001041">
    <property type="entry name" value="2Fe-2S_ferredoxin-type"/>
</dbReference>
<dbReference type="InterPro" id="IPR006058">
    <property type="entry name" value="2Fe2S_fd_BS"/>
</dbReference>
<dbReference type="InterPro" id="IPR012675">
    <property type="entry name" value="Beta-grasp_dom_sf"/>
</dbReference>
<dbReference type="InterPro" id="IPR010241">
    <property type="entry name" value="Fd_pln"/>
</dbReference>
<dbReference type="NCBIfam" id="TIGR02008">
    <property type="entry name" value="fdx_plant"/>
    <property type="match status" value="1"/>
</dbReference>
<dbReference type="PANTHER" id="PTHR43112">
    <property type="entry name" value="FERREDOXIN"/>
    <property type="match status" value="1"/>
</dbReference>
<dbReference type="PANTHER" id="PTHR43112:SF3">
    <property type="entry name" value="FERREDOXIN-2, CHLOROPLASTIC"/>
    <property type="match status" value="1"/>
</dbReference>
<dbReference type="Pfam" id="PF00111">
    <property type="entry name" value="Fer2"/>
    <property type="match status" value="1"/>
</dbReference>
<dbReference type="SUPFAM" id="SSF54292">
    <property type="entry name" value="2Fe-2S ferredoxin-like"/>
    <property type="match status" value="1"/>
</dbReference>
<dbReference type="PROSITE" id="PS00197">
    <property type="entry name" value="2FE2S_FER_1"/>
    <property type="match status" value="1"/>
</dbReference>
<dbReference type="PROSITE" id="PS51085">
    <property type="entry name" value="2FE2S_FER_2"/>
    <property type="match status" value="1"/>
</dbReference>